<name>YNDE_BACSU</name>
<proteinExistence type="evidence at protein level"/>
<protein>
    <recommendedName>
        <fullName>Spore germination protein YndE</fullName>
    </recommendedName>
</protein>
<keyword id="KW-0029">Amino-acid transport</keyword>
<keyword id="KW-1003">Cell membrane</keyword>
<keyword id="KW-0309">Germination</keyword>
<keyword id="KW-0472">Membrane</keyword>
<keyword id="KW-1185">Reference proteome</keyword>
<keyword id="KW-0812">Transmembrane</keyword>
<keyword id="KW-1133">Transmembrane helix</keyword>
<keyword id="KW-0813">Transport</keyword>
<feature type="chain" id="PRO_0000360156" description="Spore germination protein YndE">
    <location>
        <begin position="1"/>
        <end position="363"/>
    </location>
</feature>
<feature type="transmembrane region" description="Helical" evidence="2">
    <location>
        <begin position="8"/>
        <end position="28"/>
    </location>
</feature>
<feature type="transmembrane region" description="Helical" evidence="2">
    <location>
        <begin position="41"/>
        <end position="61"/>
    </location>
</feature>
<feature type="transmembrane region" description="Helical" evidence="2">
    <location>
        <begin position="84"/>
        <end position="104"/>
    </location>
</feature>
<feature type="transmembrane region" description="Helical" evidence="2">
    <location>
        <begin position="113"/>
        <end position="133"/>
    </location>
</feature>
<feature type="transmembrane region" description="Helical" evidence="2">
    <location>
        <begin position="149"/>
        <end position="169"/>
    </location>
</feature>
<feature type="transmembrane region" description="Helical" evidence="2">
    <location>
        <begin position="189"/>
        <end position="209"/>
    </location>
</feature>
<feature type="transmembrane region" description="Helical" evidence="2">
    <location>
        <begin position="218"/>
        <end position="238"/>
    </location>
</feature>
<feature type="transmembrane region" description="Helical" evidence="2">
    <location>
        <begin position="273"/>
        <end position="293"/>
    </location>
</feature>
<feature type="transmembrane region" description="Helical" evidence="2">
    <location>
        <begin position="305"/>
        <end position="325"/>
    </location>
</feature>
<feature type="transmembrane region" description="Helical" evidence="2">
    <location>
        <begin position="335"/>
        <end position="355"/>
    </location>
</feature>
<dbReference type="EMBL" id="AL009126">
    <property type="protein sequence ID" value="CAB13660.1"/>
    <property type="molecule type" value="Genomic_DNA"/>
</dbReference>
<dbReference type="PIR" id="E69889">
    <property type="entry name" value="E69889"/>
</dbReference>
<dbReference type="RefSeq" id="NP_389659.1">
    <property type="nucleotide sequence ID" value="NC_000964.3"/>
</dbReference>
<dbReference type="RefSeq" id="WP_003231622.1">
    <property type="nucleotide sequence ID" value="NZ_OZ025638.1"/>
</dbReference>
<dbReference type="SMR" id="O31809"/>
<dbReference type="FunCoup" id="O31809">
    <property type="interactions" value="96"/>
</dbReference>
<dbReference type="STRING" id="224308.BSU17760"/>
<dbReference type="TCDB" id="2.A.3.9.4">
    <property type="family name" value="the amino acid-polyamine-organocation (apc) family"/>
</dbReference>
<dbReference type="PaxDb" id="224308-BSU17760"/>
<dbReference type="EnsemblBacteria" id="CAB13660">
    <property type="protein sequence ID" value="CAB13660"/>
    <property type="gene ID" value="BSU_17760"/>
</dbReference>
<dbReference type="GeneID" id="936538"/>
<dbReference type="KEGG" id="bsu:BSU17760"/>
<dbReference type="PATRIC" id="fig|224308.179.peg.1936"/>
<dbReference type="eggNOG" id="COG0531">
    <property type="taxonomic scope" value="Bacteria"/>
</dbReference>
<dbReference type="InParanoid" id="O31809"/>
<dbReference type="OrthoDB" id="2716906at2"/>
<dbReference type="PhylomeDB" id="O31809"/>
<dbReference type="BioCyc" id="BSUB:BSU17760-MONOMER"/>
<dbReference type="Proteomes" id="UP000001570">
    <property type="component" value="Chromosome"/>
</dbReference>
<dbReference type="GO" id="GO:0005886">
    <property type="term" value="C:plasma membrane"/>
    <property type="evidence" value="ECO:0007669"/>
    <property type="project" value="UniProtKB-SubCell"/>
</dbReference>
<dbReference type="GO" id="GO:0006865">
    <property type="term" value="P:amino acid transport"/>
    <property type="evidence" value="ECO:0007669"/>
    <property type="project" value="UniProtKB-KW"/>
</dbReference>
<dbReference type="GO" id="GO:0009847">
    <property type="term" value="P:spore germination"/>
    <property type="evidence" value="ECO:0007669"/>
    <property type="project" value="InterPro"/>
</dbReference>
<dbReference type="Gene3D" id="1.20.1740.10">
    <property type="entry name" value="Amino acid/polyamine transporter I"/>
    <property type="match status" value="1"/>
</dbReference>
<dbReference type="InterPro" id="IPR004761">
    <property type="entry name" value="Spore_GerAB"/>
</dbReference>
<dbReference type="NCBIfam" id="TIGR00912">
    <property type="entry name" value="2A0309"/>
    <property type="match status" value="1"/>
</dbReference>
<dbReference type="PANTHER" id="PTHR34975">
    <property type="entry name" value="SPORE GERMINATION PROTEIN A2"/>
    <property type="match status" value="1"/>
</dbReference>
<dbReference type="PANTHER" id="PTHR34975:SF2">
    <property type="entry name" value="SPORE GERMINATION PROTEIN A2"/>
    <property type="match status" value="1"/>
</dbReference>
<dbReference type="Pfam" id="PF03845">
    <property type="entry name" value="Spore_permease"/>
    <property type="match status" value="1"/>
</dbReference>
<dbReference type="PIRSF" id="PIRSF006060">
    <property type="entry name" value="AA_transporter"/>
    <property type="match status" value="1"/>
</dbReference>
<accession>O31809</accession>
<reference key="1">
    <citation type="journal article" date="1997" name="Nature">
        <title>The complete genome sequence of the Gram-positive bacterium Bacillus subtilis.</title>
        <authorList>
            <person name="Kunst F."/>
            <person name="Ogasawara N."/>
            <person name="Moszer I."/>
            <person name="Albertini A.M."/>
            <person name="Alloni G."/>
            <person name="Azevedo V."/>
            <person name="Bertero M.G."/>
            <person name="Bessieres P."/>
            <person name="Bolotin A."/>
            <person name="Borchert S."/>
            <person name="Borriss R."/>
            <person name="Boursier L."/>
            <person name="Brans A."/>
            <person name="Braun M."/>
            <person name="Brignell S.C."/>
            <person name="Bron S."/>
            <person name="Brouillet S."/>
            <person name="Bruschi C.V."/>
            <person name="Caldwell B."/>
            <person name="Capuano V."/>
            <person name="Carter N.M."/>
            <person name="Choi S.-K."/>
            <person name="Codani J.-J."/>
            <person name="Connerton I.F."/>
            <person name="Cummings N.J."/>
            <person name="Daniel R.A."/>
            <person name="Denizot F."/>
            <person name="Devine K.M."/>
            <person name="Duesterhoeft A."/>
            <person name="Ehrlich S.D."/>
            <person name="Emmerson P.T."/>
            <person name="Entian K.-D."/>
            <person name="Errington J."/>
            <person name="Fabret C."/>
            <person name="Ferrari E."/>
            <person name="Foulger D."/>
            <person name="Fritz C."/>
            <person name="Fujita M."/>
            <person name="Fujita Y."/>
            <person name="Fuma S."/>
            <person name="Galizzi A."/>
            <person name="Galleron N."/>
            <person name="Ghim S.-Y."/>
            <person name="Glaser P."/>
            <person name="Goffeau A."/>
            <person name="Golightly E.J."/>
            <person name="Grandi G."/>
            <person name="Guiseppi G."/>
            <person name="Guy B.J."/>
            <person name="Haga K."/>
            <person name="Haiech J."/>
            <person name="Harwood C.R."/>
            <person name="Henaut A."/>
            <person name="Hilbert H."/>
            <person name="Holsappel S."/>
            <person name="Hosono S."/>
            <person name="Hullo M.-F."/>
            <person name="Itaya M."/>
            <person name="Jones L.-M."/>
            <person name="Joris B."/>
            <person name="Karamata D."/>
            <person name="Kasahara Y."/>
            <person name="Klaerr-Blanchard M."/>
            <person name="Klein C."/>
            <person name="Kobayashi Y."/>
            <person name="Koetter P."/>
            <person name="Koningstein G."/>
            <person name="Krogh S."/>
            <person name="Kumano M."/>
            <person name="Kurita K."/>
            <person name="Lapidus A."/>
            <person name="Lardinois S."/>
            <person name="Lauber J."/>
            <person name="Lazarevic V."/>
            <person name="Lee S.-M."/>
            <person name="Levine A."/>
            <person name="Liu H."/>
            <person name="Masuda S."/>
            <person name="Mauel C."/>
            <person name="Medigue C."/>
            <person name="Medina N."/>
            <person name="Mellado R.P."/>
            <person name="Mizuno M."/>
            <person name="Moestl D."/>
            <person name="Nakai S."/>
            <person name="Noback M."/>
            <person name="Noone D."/>
            <person name="O'Reilly M."/>
            <person name="Ogawa K."/>
            <person name="Ogiwara A."/>
            <person name="Oudega B."/>
            <person name="Park S.-H."/>
            <person name="Parro V."/>
            <person name="Pohl T.M."/>
            <person name="Portetelle D."/>
            <person name="Porwollik S."/>
            <person name="Prescott A.M."/>
            <person name="Presecan E."/>
            <person name="Pujic P."/>
            <person name="Purnelle B."/>
            <person name="Rapoport G."/>
            <person name="Rey M."/>
            <person name="Reynolds S."/>
            <person name="Rieger M."/>
            <person name="Rivolta C."/>
            <person name="Rocha E."/>
            <person name="Roche B."/>
            <person name="Rose M."/>
            <person name="Sadaie Y."/>
            <person name="Sato T."/>
            <person name="Scanlan E."/>
            <person name="Schleich S."/>
            <person name="Schroeter R."/>
            <person name="Scoffone F."/>
            <person name="Sekiguchi J."/>
            <person name="Sekowska A."/>
            <person name="Seror S.J."/>
            <person name="Serror P."/>
            <person name="Shin B.-S."/>
            <person name="Soldo B."/>
            <person name="Sorokin A."/>
            <person name="Tacconi E."/>
            <person name="Takagi T."/>
            <person name="Takahashi H."/>
            <person name="Takemaru K."/>
            <person name="Takeuchi M."/>
            <person name="Tamakoshi A."/>
            <person name="Tanaka T."/>
            <person name="Terpstra P."/>
            <person name="Tognoni A."/>
            <person name="Tosato V."/>
            <person name="Uchiyama S."/>
            <person name="Vandenbol M."/>
            <person name="Vannier F."/>
            <person name="Vassarotti A."/>
            <person name="Viari A."/>
            <person name="Wambutt R."/>
            <person name="Wedler E."/>
            <person name="Wedler H."/>
            <person name="Weitzenegger T."/>
            <person name="Winters P."/>
            <person name="Wipat A."/>
            <person name="Yamamoto H."/>
            <person name="Yamane K."/>
            <person name="Yasumoto K."/>
            <person name="Yata K."/>
            <person name="Yoshida K."/>
            <person name="Yoshikawa H.-F."/>
            <person name="Zumstein E."/>
            <person name="Yoshikawa H."/>
            <person name="Danchin A."/>
        </authorList>
    </citation>
    <scope>NUCLEOTIDE SEQUENCE [LARGE SCALE GENOMIC DNA]</scope>
    <source>
        <strain>168</strain>
    </source>
</reference>
<reference key="2">
    <citation type="journal article" date="2000" name="J. Bacteriol.">
        <title>Role of ger proteins in nutrient and nonnutrient triggering of spore germination in Bacillus subtilis.</title>
        <authorList>
            <person name="Paidhungat M."/>
            <person name="Setlow P."/>
        </authorList>
    </citation>
    <scope>FUNCTION IN GERMINATION</scope>
</reference>
<evidence type="ECO:0000250" key="1"/>
<evidence type="ECO:0000255" key="2"/>
<evidence type="ECO:0000269" key="3">
    <source>
    </source>
</evidence>
<evidence type="ECO:0000305" key="4"/>
<comment type="function">
    <text evidence="1 3">Involved in the germinative response to L-alanine. Could be an amino acid transporter (By similarity).</text>
</comment>
<comment type="subcellular location">
    <subcellularLocation>
        <location evidence="1">Cell membrane</location>
        <topology evidence="1">Multi-pass membrane protein</topology>
    </subcellularLocation>
</comment>
<comment type="similarity">
    <text evidence="4">Belongs to the amino acid-polyamine-organocation (APC) superfamily. Spore germination protein (SGP) (TC 2.A.3.9) family.</text>
</comment>
<gene>
    <name type="primary">yndE</name>
    <name type="ordered locus">BSU17760</name>
</gene>
<organism>
    <name type="scientific">Bacillus subtilis (strain 168)</name>
    <dbReference type="NCBI Taxonomy" id="224308"/>
    <lineage>
        <taxon>Bacteria</taxon>
        <taxon>Bacillati</taxon>
        <taxon>Bacillota</taxon>
        <taxon>Bacilli</taxon>
        <taxon>Bacillales</taxon>
        <taxon>Bacillaceae</taxon>
        <taxon>Bacillus</taxon>
    </lineage>
</organism>
<sequence length="363" mass="40471">MFSPTSKITTAQATIIIINYMLAAGVLTLPRTVTEQTQSPDGWISVLLGGVLAVIAGMIIAKLSQQYPKETFYEYSRHIVGKWLGHLISIVFITYFLALGAFEVRVMSEIVDFFLLEGTPSWAIIMTVLWIGLYSITQGLDPIARLFEMIFPITVIIFLTIALMSLGIFEINNLRPVLGDGIMPVLRGVKTTNLSFTCSEIMFILVAFMKKPKNAVKAVVIGTGVVTSFYMITMIMVIGALSVEGVVTRTWPGLDLMRSFEIPGLIFERFESFLLVIWIMQLFATFIITFYAASLGVSQVFKKKPLSCMFGLLPVIYILSCMPKNENDVFILGDTVSHIALYIFGALPILLLVISKWRKRGEK</sequence>